<sequence>MVLITVLANLLILQLSYAQKSSELVIGGDECNINEHRFLVALYDVWSGDFLCGGTLINKEYVLTAAHCETRNMYIYLGMHNKNVQFDDEQRRYPKKKYFFRCSNNFTRWDKDIMLIRLNRPVRNSEHIAPLSLPSSPPSVGSVCRVMGWGTITSPNETLPDVPRCANINLLNYTVCRGVFPRLPARSRTLCAGVLQGGIDTCKRDSGGPLICNGQLQGVVFWGPKPCAQPRKPALYTKVFNHLDWIQSIIAGNTTVTCPP</sequence>
<feature type="signal peptide" evidence="3">
    <location>
        <begin position="1"/>
        <end position="18"/>
    </location>
</feature>
<feature type="propeptide" id="PRO_0000416386" evidence="1">
    <location>
        <begin position="19"/>
        <end position="24"/>
    </location>
</feature>
<feature type="chain" id="PRO_0000416387" description="Thrombin-like enzyme 1">
    <location>
        <begin position="25"/>
        <end position="260"/>
    </location>
</feature>
<feature type="domain" description="Peptidase S1" evidence="4">
    <location>
        <begin position="25"/>
        <end position="251"/>
    </location>
</feature>
<feature type="active site" description="Charge relay system" evidence="2">
    <location>
        <position position="67"/>
    </location>
</feature>
<feature type="active site" description="Charge relay system" evidence="2">
    <location>
        <position position="112"/>
    </location>
</feature>
<feature type="active site" description="Charge relay system" evidence="2">
    <location>
        <position position="206"/>
    </location>
</feature>
<feature type="glycosylation site" description="N-linked (GlcNAc...) asparagine" evidence="3">
    <location>
        <position position="105"/>
    </location>
</feature>
<feature type="glycosylation site" description="N-linked (GlcNAc...) asparagine" evidence="3">
    <location>
        <position position="156"/>
    </location>
</feature>
<feature type="glycosylation site" description="N-linked (GlcNAc...) asparagine" evidence="3">
    <location>
        <position position="172"/>
    </location>
</feature>
<feature type="glycosylation site" description="N-linked (GlcNAc...) asparagine" evidence="3">
    <location>
        <position position="253"/>
    </location>
</feature>
<feature type="disulfide bond" evidence="4">
    <location>
        <begin position="31"/>
        <end position="165"/>
    </location>
</feature>
<feature type="disulfide bond" evidence="4">
    <location>
        <begin position="52"/>
        <end position="68"/>
    </location>
</feature>
<feature type="disulfide bond" evidence="4">
    <location>
        <begin position="102"/>
        <end position="258"/>
    </location>
</feature>
<feature type="disulfide bond" evidence="4">
    <location>
        <begin position="144"/>
        <end position="212"/>
    </location>
</feature>
<feature type="disulfide bond" evidence="4">
    <location>
        <begin position="176"/>
        <end position="191"/>
    </location>
</feature>
<feature type="disulfide bond" evidence="4">
    <location>
        <begin position="202"/>
        <end position="227"/>
    </location>
</feature>
<reference key="1">
    <citation type="journal article" date="2006" name="Toxicon">
        <title>Molecular cloning of novel serine proteases and phospholipases A2 from green pit viper (Trimeresurus albolabris) venom gland cDNA library.</title>
        <authorList>
            <person name="Rojnuckarin P."/>
            <person name="Muanpasitporn C."/>
            <person name="Chanhome L."/>
            <person name="Arpijuntarangkoon J."/>
            <person name="Intragumtornchai T."/>
        </authorList>
    </citation>
    <scope>NUCLEOTIDE SEQUENCE [MRNA]</scope>
    <source>
        <tissue>Venom gland</tissue>
    </source>
</reference>
<keyword id="KW-1204">Blood coagulation cascade activating toxin</keyword>
<keyword id="KW-1015">Disulfide bond</keyword>
<keyword id="KW-0325">Glycoprotein</keyword>
<keyword id="KW-1199">Hemostasis impairing toxin</keyword>
<keyword id="KW-0378">Hydrolase</keyword>
<keyword id="KW-0645">Protease</keyword>
<keyword id="KW-0964">Secreted</keyword>
<keyword id="KW-0720">Serine protease</keyword>
<keyword id="KW-0732">Signal</keyword>
<keyword id="KW-0800">Toxin</keyword>
<keyword id="KW-0865">Zymogen</keyword>
<dbReference type="EC" id="3.4.21.-"/>
<dbReference type="EMBL" id="EF690365">
    <property type="protein sequence ID" value="ABS12074.1"/>
    <property type="molecule type" value="mRNA"/>
</dbReference>
<dbReference type="SMR" id="A7LAC6"/>
<dbReference type="MEROPS" id="S01.181"/>
<dbReference type="GO" id="GO:0005576">
    <property type="term" value="C:extracellular region"/>
    <property type="evidence" value="ECO:0007669"/>
    <property type="project" value="UniProtKB-SubCell"/>
</dbReference>
<dbReference type="GO" id="GO:0030141">
    <property type="term" value="C:secretory granule"/>
    <property type="evidence" value="ECO:0007669"/>
    <property type="project" value="TreeGrafter"/>
</dbReference>
<dbReference type="GO" id="GO:0004252">
    <property type="term" value="F:serine-type endopeptidase activity"/>
    <property type="evidence" value="ECO:0007669"/>
    <property type="project" value="InterPro"/>
</dbReference>
<dbReference type="GO" id="GO:0090729">
    <property type="term" value="F:toxin activity"/>
    <property type="evidence" value="ECO:0007669"/>
    <property type="project" value="UniProtKB-KW"/>
</dbReference>
<dbReference type="GO" id="GO:0006508">
    <property type="term" value="P:proteolysis"/>
    <property type="evidence" value="ECO:0007669"/>
    <property type="project" value="UniProtKB-KW"/>
</dbReference>
<dbReference type="CDD" id="cd00190">
    <property type="entry name" value="Tryp_SPc"/>
    <property type="match status" value="1"/>
</dbReference>
<dbReference type="FunFam" id="2.40.10.10:FF:000158">
    <property type="entry name" value="Thrombin-like enzyme saxthrombin"/>
    <property type="match status" value="1"/>
</dbReference>
<dbReference type="Gene3D" id="2.40.10.10">
    <property type="entry name" value="Trypsin-like serine proteases"/>
    <property type="match status" value="2"/>
</dbReference>
<dbReference type="InterPro" id="IPR009003">
    <property type="entry name" value="Peptidase_S1_PA"/>
</dbReference>
<dbReference type="InterPro" id="IPR043504">
    <property type="entry name" value="Peptidase_S1_PA_chymotrypsin"/>
</dbReference>
<dbReference type="InterPro" id="IPR001314">
    <property type="entry name" value="Peptidase_S1A"/>
</dbReference>
<dbReference type="InterPro" id="IPR001254">
    <property type="entry name" value="Trypsin_dom"/>
</dbReference>
<dbReference type="InterPro" id="IPR018114">
    <property type="entry name" value="TRYPSIN_HIS"/>
</dbReference>
<dbReference type="PANTHER" id="PTHR24271:SF47">
    <property type="entry name" value="KALLIKREIN-1"/>
    <property type="match status" value="1"/>
</dbReference>
<dbReference type="PANTHER" id="PTHR24271">
    <property type="entry name" value="KALLIKREIN-RELATED"/>
    <property type="match status" value="1"/>
</dbReference>
<dbReference type="Pfam" id="PF00089">
    <property type="entry name" value="Trypsin"/>
    <property type="match status" value="1"/>
</dbReference>
<dbReference type="PRINTS" id="PR00722">
    <property type="entry name" value="CHYMOTRYPSIN"/>
</dbReference>
<dbReference type="SMART" id="SM00020">
    <property type="entry name" value="Tryp_SPc"/>
    <property type="match status" value="1"/>
</dbReference>
<dbReference type="SUPFAM" id="SSF50494">
    <property type="entry name" value="Trypsin-like serine proteases"/>
    <property type="match status" value="1"/>
</dbReference>
<dbReference type="PROSITE" id="PS50240">
    <property type="entry name" value="TRYPSIN_DOM"/>
    <property type="match status" value="1"/>
</dbReference>
<dbReference type="PROSITE" id="PS00134">
    <property type="entry name" value="TRYPSIN_HIS"/>
    <property type="match status" value="1"/>
</dbReference>
<accession>A7LAC6</accession>
<organism>
    <name type="scientific">Trimeresurus albolabris</name>
    <name type="common">White-lipped pit viper</name>
    <name type="synonym">Cryptelytrops albolabris</name>
    <dbReference type="NCBI Taxonomy" id="8765"/>
    <lineage>
        <taxon>Eukaryota</taxon>
        <taxon>Metazoa</taxon>
        <taxon>Chordata</taxon>
        <taxon>Craniata</taxon>
        <taxon>Vertebrata</taxon>
        <taxon>Euteleostomi</taxon>
        <taxon>Lepidosauria</taxon>
        <taxon>Squamata</taxon>
        <taxon>Bifurcata</taxon>
        <taxon>Unidentata</taxon>
        <taxon>Episquamata</taxon>
        <taxon>Toxicofera</taxon>
        <taxon>Serpentes</taxon>
        <taxon>Colubroidea</taxon>
        <taxon>Viperidae</taxon>
        <taxon>Crotalinae</taxon>
        <taxon>Trimeresurus</taxon>
    </lineage>
</organism>
<comment type="function">
    <text evidence="1">Thrombin-like snake venom serine protease.</text>
</comment>
<comment type="subunit">
    <text evidence="1">Monomer.</text>
</comment>
<comment type="subcellular location">
    <subcellularLocation>
        <location evidence="1">Secreted</location>
    </subcellularLocation>
</comment>
<comment type="tissue specificity">
    <text>Expressed by the venom gland.</text>
</comment>
<comment type="similarity">
    <text evidence="4">Belongs to the peptidase S1 family. Snake venom subfamily.</text>
</comment>
<proteinExistence type="evidence at transcript level"/>
<name>VSP1_TRIAB</name>
<evidence type="ECO:0000250" key="1"/>
<evidence type="ECO:0000250" key="2">
    <source>
        <dbReference type="UniProtKB" id="Q9I8X1"/>
    </source>
</evidence>
<evidence type="ECO:0000255" key="3"/>
<evidence type="ECO:0000255" key="4">
    <source>
        <dbReference type="PROSITE-ProRule" id="PRU00274"/>
    </source>
</evidence>
<protein>
    <recommendedName>
        <fullName>Thrombin-like enzyme 1</fullName>
        <shortName>SVTLE</shortName>
        <ecNumber>3.4.21.-</ecNumber>
    </recommendedName>
    <alternativeName>
        <fullName>Fibrinogen-clotting enzyme</fullName>
    </alternativeName>
    <alternativeName>
        <fullName>Green pit viper thrombin-like enzyme 1</fullName>
        <shortName>GPV-TL1</shortName>
    </alternativeName>
    <alternativeName>
        <fullName>Snake venom serine protease</fullName>
        <shortName>SVSP</shortName>
    </alternativeName>
</protein>